<proteinExistence type="inferred from homology"/>
<feature type="chain" id="PRO_0000279988" description="Glutathione transport system permease protein GsiC">
    <location>
        <begin position="1"/>
        <end position="306"/>
    </location>
</feature>
<feature type="topological domain" description="Cytoplasmic" evidence="2">
    <location>
        <begin position="1"/>
        <end position="8"/>
    </location>
</feature>
<feature type="transmembrane region" description="Helical" evidence="3">
    <location>
        <begin position="9"/>
        <end position="29"/>
    </location>
</feature>
<feature type="topological domain" description="Periplasmic" evidence="2">
    <location>
        <begin position="30"/>
        <end position="102"/>
    </location>
</feature>
<feature type="transmembrane region" description="Helical" evidence="3">
    <location>
        <begin position="103"/>
        <end position="123"/>
    </location>
</feature>
<feature type="topological domain" description="Cytoplasmic" evidence="2">
    <location>
        <begin position="124"/>
        <end position="134"/>
    </location>
</feature>
<feature type="transmembrane region" description="Helical" evidence="3">
    <location>
        <begin position="135"/>
        <end position="155"/>
    </location>
</feature>
<feature type="topological domain" description="Periplasmic" evidence="2">
    <location>
        <begin position="156"/>
        <end position="168"/>
    </location>
</feature>
<feature type="transmembrane region" description="Helical" evidence="3">
    <location>
        <begin position="169"/>
        <end position="189"/>
    </location>
</feature>
<feature type="topological domain" description="Cytoplasmic" evidence="2">
    <location>
        <begin position="190"/>
        <end position="228"/>
    </location>
</feature>
<feature type="transmembrane region" description="Helical" evidence="3">
    <location>
        <begin position="229"/>
        <end position="249"/>
    </location>
</feature>
<feature type="topological domain" description="Periplasmic" evidence="2">
    <location>
        <begin position="250"/>
        <end position="277"/>
    </location>
</feature>
<feature type="transmembrane region" description="Helical" evidence="3">
    <location>
        <begin position="278"/>
        <end position="298"/>
    </location>
</feature>
<feature type="topological domain" description="Cytoplasmic" evidence="2">
    <location>
        <begin position="299"/>
        <end position="306"/>
    </location>
</feature>
<feature type="domain" description="ABC transmembrane type-1" evidence="3">
    <location>
        <begin position="95"/>
        <end position="292"/>
    </location>
</feature>
<reference key="1">
    <citation type="journal article" date="2006" name="Proc. Natl. Acad. Sci. U.S.A.">
        <title>Identification of genes subject to positive selection in uropathogenic strains of Escherichia coli: a comparative genomics approach.</title>
        <authorList>
            <person name="Chen S.L."/>
            <person name="Hung C.-S."/>
            <person name="Xu J."/>
            <person name="Reigstad C.S."/>
            <person name="Magrini V."/>
            <person name="Sabo A."/>
            <person name="Blasiar D."/>
            <person name="Bieri T."/>
            <person name="Meyer R.R."/>
            <person name="Ozersky P."/>
            <person name="Armstrong J.R."/>
            <person name="Fulton R.S."/>
            <person name="Latreille J.P."/>
            <person name="Spieth J."/>
            <person name="Hooton T.M."/>
            <person name="Mardis E.R."/>
            <person name="Hultgren S.J."/>
            <person name="Gordon J.I."/>
        </authorList>
    </citation>
    <scope>NUCLEOTIDE SEQUENCE [LARGE SCALE GENOMIC DNA]</scope>
    <source>
        <strain>UTI89 / UPEC</strain>
    </source>
</reference>
<sequence>MLNYVIKRLLGLIPTLFIVSVLVFLFVHMLPGDPARLIAGPEADAQVIELVRQQLGLDQPLYHQFWHYISNAVQGDFGLSMVSRRPVADEIASRFMPTLWLTITSMVWAVIFGMAAGIIAAVWRNRWPDRLSMTIAVSGISFPAFALGMLLIQVFSVELGWLPTVGADSWQHYILPSLTLGAAVAAVMARFTRASFVDVLSEDYMRTARAKGVSETWVVLKHGLRNAMIPVVTMMGLQFGFLLGGSIVVEKVFNWPGLGRLLVDSVEMRDYPVIQAEILLFSLEFILINLVVDVLYAAINPAIRYK</sequence>
<comment type="function">
    <text evidence="1">Part of the ABC transporter complex GsiABCD involved in glutathione import. Probably responsible for the translocation of the substrate across the membrane.</text>
</comment>
<comment type="subunit">
    <text evidence="1">The complex is composed of two ATP-binding proteins (GsiA), two transmembrane proteins (GsiC and GsiD) and a solute-binding protein (GsiB).</text>
</comment>
<comment type="subcellular location">
    <subcellularLocation>
        <location evidence="1">Cell inner membrane</location>
        <topology evidence="2">Multi-pass membrane protein</topology>
    </subcellularLocation>
</comment>
<comment type="similarity">
    <text evidence="4">Belongs to the binding-protein-dependent transport system permease family.</text>
</comment>
<accession>Q1RE94</accession>
<gene>
    <name evidence="1" type="primary">gsiC</name>
    <name type="ordered locus">UTI89_C0834</name>
</gene>
<name>GSIC_ECOUT</name>
<dbReference type="EMBL" id="CP000243">
    <property type="protein sequence ID" value="ABE06320.1"/>
    <property type="molecule type" value="Genomic_DNA"/>
</dbReference>
<dbReference type="RefSeq" id="WP_000936043.1">
    <property type="nucleotide sequence ID" value="NZ_CP064825.1"/>
</dbReference>
<dbReference type="SMR" id="Q1RE94"/>
<dbReference type="GeneID" id="86863342"/>
<dbReference type="KEGG" id="eci:UTI89_C0834"/>
<dbReference type="HOGENOM" id="CLU_036879_0_0_6"/>
<dbReference type="Proteomes" id="UP000001952">
    <property type="component" value="Chromosome"/>
</dbReference>
<dbReference type="GO" id="GO:0005886">
    <property type="term" value="C:plasma membrane"/>
    <property type="evidence" value="ECO:0007669"/>
    <property type="project" value="UniProtKB-SubCell"/>
</dbReference>
<dbReference type="GO" id="GO:0055085">
    <property type="term" value="P:transmembrane transport"/>
    <property type="evidence" value="ECO:0007669"/>
    <property type="project" value="InterPro"/>
</dbReference>
<dbReference type="CDD" id="cd06261">
    <property type="entry name" value="TM_PBP2"/>
    <property type="match status" value="1"/>
</dbReference>
<dbReference type="FunFam" id="1.10.3720.10:FF:000024">
    <property type="entry name" value="Glutathione ABC transporter permease GsiC"/>
    <property type="match status" value="1"/>
</dbReference>
<dbReference type="Gene3D" id="1.10.3720.10">
    <property type="entry name" value="MetI-like"/>
    <property type="match status" value="1"/>
</dbReference>
<dbReference type="InterPro" id="IPR045621">
    <property type="entry name" value="BPD_transp_1_N"/>
</dbReference>
<dbReference type="InterPro" id="IPR000515">
    <property type="entry name" value="MetI-like"/>
</dbReference>
<dbReference type="InterPro" id="IPR035906">
    <property type="entry name" value="MetI-like_sf"/>
</dbReference>
<dbReference type="NCBIfam" id="NF011661">
    <property type="entry name" value="PRK15081.1"/>
    <property type="match status" value="1"/>
</dbReference>
<dbReference type="PANTHER" id="PTHR43163">
    <property type="entry name" value="DIPEPTIDE TRANSPORT SYSTEM PERMEASE PROTEIN DPPB-RELATED"/>
    <property type="match status" value="1"/>
</dbReference>
<dbReference type="PANTHER" id="PTHR43163:SF5">
    <property type="entry name" value="GLUTATHIONE TRANSPORT SYSTEM PERMEASE PROTEIN GSIC"/>
    <property type="match status" value="1"/>
</dbReference>
<dbReference type="Pfam" id="PF00528">
    <property type="entry name" value="BPD_transp_1"/>
    <property type="match status" value="1"/>
</dbReference>
<dbReference type="Pfam" id="PF19300">
    <property type="entry name" value="BPD_transp_1_N"/>
    <property type="match status" value="1"/>
</dbReference>
<dbReference type="SUPFAM" id="SSF161098">
    <property type="entry name" value="MetI-like"/>
    <property type="match status" value="1"/>
</dbReference>
<dbReference type="PROSITE" id="PS50928">
    <property type="entry name" value="ABC_TM1"/>
    <property type="match status" value="1"/>
</dbReference>
<evidence type="ECO:0000250" key="1">
    <source>
        <dbReference type="UniProtKB" id="P75798"/>
    </source>
</evidence>
<evidence type="ECO:0000255" key="2"/>
<evidence type="ECO:0000255" key="3">
    <source>
        <dbReference type="PROSITE-ProRule" id="PRU00441"/>
    </source>
</evidence>
<evidence type="ECO:0000305" key="4"/>
<protein>
    <recommendedName>
        <fullName evidence="1">Glutathione transport system permease protein GsiC</fullName>
    </recommendedName>
</protein>
<organism>
    <name type="scientific">Escherichia coli (strain UTI89 / UPEC)</name>
    <dbReference type="NCBI Taxonomy" id="364106"/>
    <lineage>
        <taxon>Bacteria</taxon>
        <taxon>Pseudomonadati</taxon>
        <taxon>Pseudomonadota</taxon>
        <taxon>Gammaproteobacteria</taxon>
        <taxon>Enterobacterales</taxon>
        <taxon>Enterobacteriaceae</taxon>
        <taxon>Escherichia</taxon>
    </lineage>
</organism>
<keyword id="KW-0997">Cell inner membrane</keyword>
<keyword id="KW-1003">Cell membrane</keyword>
<keyword id="KW-0472">Membrane</keyword>
<keyword id="KW-0812">Transmembrane</keyword>
<keyword id="KW-1133">Transmembrane helix</keyword>
<keyword id="KW-0813">Transport</keyword>